<gene>
    <name type="primary">RAD24</name>
    <name type="ordered locus">YER173W</name>
    <name type="ORF">SYGP-ORF60</name>
</gene>
<accession>P32641</accession>
<accession>D3DM81</accession>
<evidence type="ECO:0000255" key="1"/>
<evidence type="ECO:0000256" key="2">
    <source>
        <dbReference type="SAM" id="MobiDB-lite"/>
    </source>
</evidence>
<evidence type="ECO:0000269" key="3">
    <source>
    </source>
</evidence>
<evidence type="ECO:0000269" key="4">
    <source>
    </source>
</evidence>
<evidence type="ECO:0000269" key="5">
    <source>
    </source>
</evidence>
<evidence type="ECO:0000269" key="6">
    <source>
    </source>
</evidence>
<evidence type="ECO:0000269" key="7">
    <source>
    </source>
</evidence>
<evidence type="ECO:0000269" key="8">
    <source>
    </source>
</evidence>
<evidence type="ECO:0000269" key="9">
    <source>
    </source>
</evidence>
<evidence type="ECO:0000305" key="10"/>
<evidence type="ECO:0007744" key="11">
    <source>
    </source>
</evidence>
<evidence type="ECO:0007744" key="12">
    <source>
    </source>
</evidence>
<evidence type="ECO:0007829" key="13">
    <source>
        <dbReference type="PDB" id="7SGZ"/>
    </source>
</evidence>
<evidence type="ECO:0007829" key="14">
    <source>
        <dbReference type="PDB" id="7ST9"/>
    </source>
</evidence>
<evidence type="ECO:0007829" key="15">
    <source>
        <dbReference type="PDB" id="7STB"/>
    </source>
</evidence>
<evidence type="ECO:0007829" key="16">
    <source>
        <dbReference type="PDB" id="7STE"/>
    </source>
</evidence>
<evidence type="ECO:0007829" key="17">
    <source>
        <dbReference type="PDB" id="8DQW"/>
    </source>
</evidence>
<evidence type="ECO:0007829" key="18">
    <source>
        <dbReference type="PDB" id="8FS6"/>
    </source>
</evidence>
<evidence type="ECO:0007829" key="19">
    <source>
        <dbReference type="PDB" id="8FS7"/>
    </source>
</evidence>
<organism>
    <name type="scientific">Saccharomyces cerevisiae (strain ATCC 204508 / S288c)</name>
    <name type="common">Baker's yeast</name>
    <dbReference type="NCBI Taxonomy" id="559292"/>
    <lineage>
        <taxon>Eukaryota</taxon>
        <taxon>Fungi</taxon>
        <taxon>Dikarya</taxon>
        <taxon>Ascomycota</taxon>
        <taxon>Saccharomycotina</taxon>
        <taxon>Saccharomycetes</taxon>
        <taxon>Saccharomycetales</taxon>
        <taxon>Saccharomycetaceae</taxon>
        <taxon>Saccharomyces</taxon>
    </lineage>
</organism>
<protein>
    <recommendedName>
        <fullName>Checkpoint protein RAD24</fullName>
    </recommendedName>
</protein>
<sequence length="659" mass="75727">MDSTNLNKRPLLQYSLSSLGSQITKWSSSRPTSPVRKARSTENDFLSKQDTSSILPSINDDGGEQWYEKFKPNCLEQVAIHKRKLKDVQEALDAMFLPNAKHRILLLSGPSGCSKSTVIKELSKILVPKYRQNSNGTSFRSTPNEHKVTEFRGDCIVNDLPQMESFSEFLKGARYLVMSNLSLILIEDLPNVFHIDTRRRFQQLILQWLYSSEPLLPPLVICITECEIPENDNNYRKFGIDYTFSAETIMNKEILMHPRLKRIKFNPINSTLLKKHLKFICVQNMKMLKEKNKWNKRQEVIDYIAQETGDIRSAITTLQFWATSSGSLPISTRESTISYFHAIGKVIHGSHSTNNDNEMINNLFENSNNLLSKEDFKLGILENYNTFNKGEFSISDASSIVDCLSECDNMNGLPESNEYGLREVRKTFRNISKQGHNHGTVYFPREWKVRKLQNSFKVQAEDWLNVSLYKYNAVHSFRNITLEFGYYAPLIRKCQSYKKKYILYYLKNLPSGSSGPKQTMDKFSDIMKVENGIDVVDRIGGPIEALSVEDGLAPLMDNDSNNCDHLEDQKKERDRRLRMLIDQYERNVMMANDDLEDEETSFNDDPIVDSDSDNSNNIGNETFGRSDEDESLCEILSQRQPRKAPVISESLSDSDLEIL</sequence>
<keyword id="KW-0002">3D-structure</keyword>
<keyword id="KW-0067">ATP-binding</keyword>
<keyword id="KW-0131">Cell cycle</keyword>
<keyword id="KW-0227">DNA damage</keyword>
<keyword id="KW-0547">Nucleotide-binding</keyword>
<keyword id="KW-0539">Nucleus</keyword>
<keyword id="KW-0597">Phosphoprotein</keyword>
<keyword id="KW-1185">Reference proteome</keyword>
<name>RAD24_YEAST</name>
<comment type="function">
    <text evidence="4 5 6">Participates in checkpoint pathways arrest of the cell cycle, a mechanism that allows the DNA repair pathways to act to restore the integrity of the DNA prior to DNA synthesis or separation of the replicated chromosomes. Regulates the DNA damage checkpoint pathway throughout the cell cycle, when associated with RCF5. Component of the RFC-like RAD24-RFC complex which loads the checkpoint clamp DDC1:MEC3:RAD17 complex and is involved in DNA repair pathways. During a clamp loading circle, the RFC:clamp complex binds to DNA and the recognition of the double-stranded/single-stranded junction stimulates ATP hydrolysis by RFC. The complex presumably provides bipartite ATP sites in which one subunit supplies a catalytic site for hydrolysis of ATP bound to the neighboring subunit. Dissociation of RFC from the clamp leaves the clamp encircling DNA.</text>
</comment>
<comment type="subunit">
    <text evidence="3 4 6 7 9">Component of the RAD24-RFC complex which consists of RAD14, RFC2, RFC3, RFC4 and RFC5 and associates with the checkpoint clamp DDC1:MEC3:RAD17 complex. RAD24 interacts with ECO1.</text>
</comment>
<comment type="interaction">
    <interactant intactId="EBI-14675">
        <id>P32641</id>
    </interactant>
    <interactant intactId="EBI-6194">
        <id>P39009</id>
        <label>DUN1</label>
    </interactant>
    <organismsDiffer>false</organismsDiffer>
    <experiments>2</experiments>
</comment>
<comment type="interaction">
    <interactant intactId="EBI-14675">
        <id>P32641</id>
    </interactant>
    <interactant intactId="EBI-14992">
        <id>P40348</id>
        <label>RFC2</label>
    </interactant>
    <organismsDiffer>false</organismsDiffer>
    <experiments>6</experiments>
</comment>
<comment type="interaction">
    <interactant intactId="EBI-14675">
        <id>P32641</id>
    </interactant>
    <interactant intactId="EBI-15000">
        <id>P38629</id>
        <label>RFC3</label>
    </interactant>
    <organismsDiffer>false</organismsDiffer>
    <experiments>6</experiments>
</comment>
<comment type="interaction">
    <interactant intactId="EBI-14675">
        <id>P32641</id>
    </interactant>
    <interactant intactId="EBI-15009">
        <id>P40339</id>
        <label>RFC4</label>
    </interactant>
    <organismsDiffer>false</organismsDiffer>
    <experiments>3</experiments>
</comment>
<comment type="interaction">
    <interactant intactId="EBI-14675">
        <id>P32641</id>
    </interactant>
    <interactant intactId="EBI-15016">
        <id>P38251</id>
        <label>RFC5</label>
    </interactant>
    <organismsDiffer>false</organismsDiffer>
    <experiments>5</experiments>
</comment>
<comment type="subcellular location">
    <subcellularLocation>
        <location evidence="10">Nucleus</location>
    </subcellularLocation>
</comment>
<comment type="miscellaneous">
    <text evidence="8">Present with 752 molecules/cell in log phase SD medium.</text>
</comment>
<comment type="similarity">
    <text evidence="10">Belongs to the rad17/RAD24 family.</text>
</comment>
<reference key="1">
    <citation type="journal article" date="1997" name="Nature">
        <title>The nucleotide sequence of Saccharomyces cerevisiae chromosome V.</title>
        <authorList>
            <person name="Dietrich F.S."/>
            <person name="Mulligan J.T."/>
            <person name="Hennessy K.M."/>
            <person name="Yelton M.A."/>
            <person name="Allen E."/>
            <person name="Araujo R."/>
            <person name="Aviles E."/>
            <person name="Berno A."/>
            <person name="Brennan T."/>
            <person name="Carpenter J."/>
            <person name="Chen E."/>
            <person name="Cherry J.M."/>
            <person name="Chung E."/>
            <person name="Duncan M."/>
            <person name="Guzman E."/>
            <person name="Hartzell G."/>
            <person name="Hunicke-Smith S."/>
            <person name="Hyman R.W."/>
            <person name="Kayser A."/>
            <person name="Komp C."/>
            <person name="Lashkari D."/>
            <person name="Lew H."/>
            <person name="Lin D."/>
            <person name="Mosedale D."/>
            <person name="Nakahara K."/>
            <person name="Namath A."/>
            <person name="Norgren R."/>
            <person name="Oefner P."/>
            <person name="Oh C."/>
            <person name="Petel F.X."/>
            <person name="Roberts D."/>
            <person name="Sehl P."/>
            <person name="Schramm S."/>
            <person name="Shogren T."/>
            <person name="Smith V."/>
            <person name="Taylor P."/>
            <person name="Wei Y."/>
            <person name="Botstein D."/>
            <person name="Davis R.W."/>
        </authorList>
    </citation>
    <scope>NUCLEOTIDE SEQUENCE [LARGE SCALE GENOMIC DNA]</scope>
    <source>
        <strain>ATCC 204508 / S288c</strain>
    </source>
</reference>
<reference key="2">
    <citation type="journal article" date="2014" name="G3 (Bethesda)">
        <title>The reference genome sequence of Saccharomyces cerevisiae: Then and now.</title>
        <authorList>
            <person name="Engel S.R."/>
            <person name="Dietrich F.S."/>
            <person name="Fisk D.G."/>
            <person name="Binkley G."/>
            <person name="Balakrishnan R."/>
            <person name="Costanzo M.C."/>
            <person name="Dwight S.S."/>
            <person name="Hitz B.C."/>
            <person name="Karra K."/>
            <person name="Nash R.S."/>
            <person name="Weng S."/>
            <person name="Wong E.D."/>
            <person name="Lloyd P."/>
            <person name="Skrzypek M.S."/>
            <person name="Miyasato S.R."/>
            <person name="Simison M."/>
            <person name="Cherry J.M."/>
        </authorList>
    </citation>
    <scope>GENOME REANNOTATION</scope>
    <source>
        <strain>ATCC 204508 / S288c</strain>
    </source>
</reference>
<reference key="3">
    <citation type="journal article" date="2000" name="Curr. Biol.">
        <title>A novel Rad24 checkpoint protein complex closely related to replication factor C.</title>
        <authorList>
            <person name="Green C.M."/>
            <person name="Erdjument-Bromage H."/>
            <person name="Tempst P."/>
            <person name="Lowndes N.F."/>
        </authorList>
    </citation>
    <scope>INTERACTION WITH RFC2</scope>
    <scope>IDENTIFICATION IN THE RAD24-RFC COMPLEX</scope>
</reference>
<reference key="4">
    <citation type="journal article" date="2000" name="Mol. Cell. Biol.">
        <title>Rfc5, in cooperation with rad24, controls DNA damage checkpoints throughout the cell cycle in Saccharomyces cerevisiae.</title>
        <authorList>
            <person name="Naiki T."/>
            <person name="Shimomura T."/>
            <person name="Kondo T."/>
            <person name="Matsumoto K."/>
            <person name="Sugimoto K."/>
        </authorList>
    </citation>
    <scope>FUNCTION</scope>
    <scope>INTERACTION WITH RCF5</scope>
    <scope>MUTAGENESIS OF LYS-115</scope>
</reference>
<reference key="5">
    <citation type="journal article" date="2001" name="Mol. Cell. Biol.">
        <title>Chl12 (Ctf18) forms a novel replication factor C-related complex and functions redundantly with Rad24 in the DNA replication checkpoint pathway.</title>
        <authorList>
            <person name="Naiki T."/>
            <person name="Kondo T."/>
            <person name="Nakada D."/>
            <person name="Matsumoto K."/>
            <person name="Sugimoto K."/>
        </authorList>
    </citation>
    <scope>FUNCTION</scope>
</reference>
<reference key="6">
    <citation type="journal article" date="2003" name="Mol. Cell. Biol.">
        <title>Mechanical link between cohesion establishment and DNA replication: Ctf7p/Eco1p, a cohesion establishment factor, associates with three different replication factor C complexes.</title>
        <authorList>
            <person name="Kenna M.A."/>
            <person name="Skibbens R.V."/>
        </authorList>
    </citation>
    <scope>INTERACTION WITH ECO1</scope>
</reference>
<reference key="7">
    <citation type="journal article" date="2003" name="Nature">
        <title>Global analysis of protein expression in yeast.</title>
        <authorList>
            <person name="Ghaemmaghami S."/>
            <person name="Huh W.-K."/>
            <person name="Bower K."/>
            <person name="Howson R.W."/>
            <person name="Belle A."/>
            <person name="Dephoure N."/>
            <person name="O'Shea E.K."/>
            <person name="Weissman J.S."/>
        </authorList>
    </citation>
    <scope>LEVEL OF PROTEIN EXPRESSION [LARGE SCALE ANALYSIS]</scope>
</reference>
<reference key="8">
    <citation type="journal article" date="2003" name="Proc. Natl. Acad. Sci. U.S.A.">
        <title>Yeast Rad17/Mec3/Ddc1: a sliding clamp for the DNA damage checkpoint.</title>
        <authorList>
            <person name="Majka J."/>
            <person name="Burgers P.M.J."/>
        </authorList>
    </citation>
    <scope>IDENTIFICATION IN THE RAD24-RFC COMPLEX</scope>
    <scope>FUNCTION OF THE RAD24-RFC COMPLEX</scope>
</reference>
<reference key="9">
    <citation type="journal article" date="2005" name="Mol. Cell. Biol.">
        <title>Replication protein A-directed unloading of PCNA by the Ctf18 cohesion establishment complex.</title>
        <authorList>
            <person name="Bylund G.O."/>
            <person name="Burgers P.M."/>
        </authorList>
    </citation>
    <scope>IDENTIFICATION IN THE RAD24-RFC COMPLEX</scope>
</reference>
<reference key="10">
    <citation type="journal article" date="2007" name="J. Proteome Res.">
        <title>Large-scale phosphorylation analysis of alpha-factor-arrested Saccharomyces cerevisiae.</title>
        <authorList>
            <person name="Li X."/>
            <person name="Gerber S.A."/>
            <person name="Rudner A.D."/>
            <person name="Beausoleil S.A."/>
            <person name="Haas W."/>
            <person name="Villen J."/>
            <person name="Elias J.E."/>
            <person name="Gygi S.P."/>
        </authorList>
    </citation>
    <scope>PHOSPHORYLATION [LARGE SCALE ANALYSIS] AT SER-652 AND SER-654</scope>
    <scope>IDENTIFICATION BY MASS SPECTROMETRY [LARGE SCALE ANALYSIS]</scope>
    <source>
        <strain>ADR376</strain>
    </source>
</reference>
<reference key="11">
    <citation type="journal article" date="2009" name="Science">
        <title>Global analysis of Cdk1 substrate phosphorylation sites provides insights into evolution.</title>
        <authorList>
            <person name="Holt L.J."/>
            <person name="Tuch B.B."/>
            <person name="Villen J."/>
            <person name="Johnson A.D."/>
            <person name="Gygi S.P."/>
            <person name="Morgan D.O."/>
        </authorList>
    </citation>
    <scope>PHOSPHORYLATION [LARGE SCALE ANALYSIS] AT SER-652 AND SER-654</scope>
    <scope>IDENTIFICATION BY MASS SPECTROMETRY [LARGE SCALE ANALYSIS]</scope>
</reference>
<reference key="12">
    <citation type="journal article" date="2012" name="Proc. Natl. Acad. Sci. U.S.A.">
        <title>N-terminal acetylome analyses and functional insights of the N-terminal acetyltransferase NatB.</title>
        <authorList>
            <person name="Van Damme P."/>
            <person name="Lasa M."/>
            <person name="Polevoda B."/>
            <person name="Gazquez C."/>
            <person name="Elosegui-Artola A."/>
            <person name="Kim D.S."/>
            <person name="De Juan-Pardo E."/>
            <person name="Demeyer K."/>
            <person name="Hole K."/>
            <person name="Larrea E."/>
            <person name="Timmerman E."/>
            <person name="Prieto J."/>
            <person name="Arnesen T."/>
            <person name="Sherman F."/>
            <person name="Gevaert K."/>
            <person name="Aldabe R."/>
        </authorList>
    </citation>
    <scope>IDENTIFICATION BY MASS SPECTROMETRY [LARGE SCALE ANALYSIS]</scope>
</reference>
<dbReference type="EMBL" id="U18922">
    <property type="protein sequence ID" value="AAB64700.1"/>
    <property type="molecule type" value="Genomic_DNA"/>
</dbReference>
<dbReference type="EMBL" id="BK006939">
    <property type="protein sequence ID" value="DAA07835.1"/>
    <property type="molecule type" value="Genomic_DNA"/>
</dbReference>
<dbReference type="PIR" id="S30859">
    <property type="entry name" value="S30859"/>
</dbReference>
<dbReference type="RefSeq" id="NP_011100.1">
    <property type="nucleotide sequence ID" value="NM_001179063.1"/>
</dbReference>
<dbReference type="PDB" id="7SGZ">
    <property type="method" value="EM"/>
    <property type="resolution" value="3.17 A"/>
    <property type="chains" value="A=1-659"/>
</dbReference>
<dbReference type="PDB" id="7SH2">
    <property type="method" value="EM"/>
    <property type="resolution" value="3.23 A"/>
    <property type="chains" value="A=1-659"/>
</dbReference>
<dbReference type="PDB" id="7ST9">
    <property type="method" value="EM"/>
    <property type="resolution" value="2.20 A"/>
    <property type="chains" value="A=1-659"/>
</dbReference>
<dbReference type="PDB" id="7STB">
    <property type="method" value="EM"/>
    <property type="resolution" value="2.72 A"/>
    <property type="chains" value="A=1-659"/>
</dbReference>
<dbReference type="PDB" id="7STE">
    <property type="method" value="EM"/>
    <property type="resolution" value="2.73 A"/>
    <property type="chains" value="A=1-659"/>
</dbReference>
<dbReference type="PDB" id="8DQW">
    <property type="method" value="EM"/>
    <property type="resolution" value="2.10 A"/>
    <property type="chains" value="A=1-659"/>
</dbReference>
<dbReference type="PDB" id="8FS3">
    <property type="method" value="EM"/>
    <property type="resolution" value="2.93 A"/>
    <property type="chains" value="A=1-545"/>
</dbReference>
<dbReference type="PDB" id="8FS4">
    <property type="method" value="EM"/>
    <property type="resolution" value="2.94 A"/>
    <property type="chains" value="A=1-544"/>
</dbReference>
<dbReference type="PDB" id="8FS5">
    <property type="method" value="EM"/>
    <property type="resolution" value="2.76 A"/>
    <property type="chains" value="A=1-545"/>
</dbReference>
<dbReference type="PDB" id="8FS6">
    <property type="method" value="EM"/>
    <property type="resolution" value="2.90 A"/>
    <property type="chains" value="A=1-545"/>
</dbReference>
<dbReference type="PDB" id="8FS7">
    <property type="method" value="EM"/>
    <property type="resolution" value="2.85 A"/>
    <property type="chains" value="A=1-545"/>
</dbReference>
<dbReference type="PDB" id="8FS8">
    <property type="method" value="EM"/>
    <property type="resolution" value="3.04 A"/>
    <property type="chains" value="A=1-499"/>
</dbReference>
<dbReference type="PDBsum" id="7SGZ"/>
<dbReference type="PDBsum" id="7SH2"/>
<dbReference type="PDBsum" id="7ST9"/>
<dbReference type="PDBsum" id="7STB"/>
<dbReference type="PDBsum" id="7STE"/>
<dbReference type="PDBsum" id="8DQW"/>
<dbReference type="PDBsum" id="8FS3"/>
<dbReference type="PDBsum" id="8FS4"/>
<dbReference type="PDBsum" id="8FS5"/>
<dbReference type="PDBsum" id="8FS6"/>
<dbReference type="PDBsum" id="8FS7"/>
<dbReference type="PDBsum" id="8FS8"/>
<dbReference type="EMDB" id="EMD-25121"/>
<dbReference type="EMDB" id="EMD-25122"/>
<dbReference type="EMDB" id="EMD-25422"/>
<dbReference type="EMDB" id="EMD-25423"/>
<dbReference type="EMDB" id="EMD-25426"/>
<dbReference type="EMDB" id="EMD-29412"/>
<dbReference type="EMDB" id="EMD-29413"/>
<dbReference type="EMDB" id="EMD-29414"/>
<dbReference type="EMDB" id="EMD-29415"/>
<dbReference type="EMDB" id="EMD-29416"/>
<dbReference type="EMDB" id="EMD-29417"/>
<dbReference type="SMR" id="P32641"/>
<dbReference type="BioGRID" id="36926">
    <property type="interactions" value="216"/>
</dbReference>
<dbReference type="ComplexPortal" id="CPX-1807">
    <property type="entry name" value="Rad17 RFC-like complex"/>
</dbReference>
<dbReference type="DIP" id="DIP-5811N"/>
<dbReference type="FunCoup" id="P32641">
    <property type="interactions" value="271"/>
</dbReference>
<dbReference type="IntAct" id="P32641">
    <property type="interactions" value="43"/>
</dbReference>
<dbReference type="STRING" id="4932.YER173W"/>
<dbReference type="iPTMnet" id="P32641"/>
<dbReference type="PaxDb" id="4932-YER173W"/>
<dbReference type="PeptideAtlas" id="P32641"/>
<dbReference type="EnsemblFungi" id="YER173W_mRNA">
    <property type="protein sequence ID" value="YER173W"/>
    <property type="gene ID" value="YER173W"/>
</dbReference>
<dbReference type="GeneID" id="856920"/>
<dbReference type="KEGG" id="sce:YER173W"/>
<dbReference type="AGR" id="SGD:S000000975"/>
<dbReference type="SGD" id="S000000975">
    <property type="gene designation" value="RAD24"/>
</dbReference>
<dbReference type="VEuPathDB" id="FungiDB:YER173W"/>
<dbReference type="eggNOG" id="KOG1970">
    <property type="taxonomic scope" value="Eukaryota"/>
</dbReference>
<dbReference type="GeneTree" id="ENSGT00440000039046"/>
<dbReference type="HOGENOM" id="CLU_027373_0_0_1"/>
<dbReference type="InParanoid" id="P32641"/>
<dbReference type="OMA" id="PREWKIR"/>
<dbReference type="OrthoDB" id="10265971at2759"/>
<dbReference type="BioCyc" id="YEAST:G3O-30333-MONOMER"/>
<dbReference type="Reactome" id="R-SCE-176187">
    <property type="pathway name" value="Activation of ATR in response to replication stress"/>
</dbReference>
<dbReference type="BioGRID-ORCS" id="856920">
    <property type="hits" value="6 hits in 10 CRISPR screens"/>
</dbReference>
<dbReference type="PRO" id="PR:P32641"/>
<dbReference type="Proteomes" id="UP000002311">
    <property type="component" value="Chromosome V"/>
</dbReference>
<dbReference type="RNAct" id="P32641">
    <property type="molecule type" value="protein"/>
</dbReference>
<dbReference type="GO" id="GO:0005634">
    <property type="term" value="C:nucleus"/>
    <property type="evidence" value="ECO:0000303"/>
    <property type="project" value="ComplexPortal"/>
</dbReference>
<dbReference type="GO" id="GO:0031389">
    <property type="term" value="C:Rad17 RFC-like complex"/>
    <property type="evidence" value="ECO:0000314"/>
    <property type="project" value="SGD"/>
</dbReference>
<dbReference type="GO" id="GO:0005524">
    <property type="term" value="F:ATP binding"/>
    <property type="evidence" value="ECO:0007669"/>
    <property type="project" value="UniProtKB-KW"/>
</dbReference>
<dbReference type="GO" id="GO:0003682">
    <property type="term" value="F:chromatin binding"/>
    <property type="evidence" value="ECO:0000318"/>
    <property type="project" value="GO_Central"/>
</dbReference>
<dbReference type="GO" id="GO:0003689">
    <property type="term" value="F:DNA clamp loader activity"/>
    <property type="evidence" value="ECO:0007669"/>
    <property type="project" value="InterPro"/>
</dbReference>
<dbReference type="GO" id="GO:0000077">
    <property type="term" value="P:DNA damage checkpoint signaling"/>
    <property type="evidence" value="ECO:0000315"/>
    <property type="project" value="SGD"/>
</dbReference>
<dbReference type="GO" id="GO:0006281">
    <property type="term" value="P:DNA repair"/>
    <property type="evidence" value="ECO:0000318"/>
    <property type="project" value="GO_Central"/>
</dbReference>
<dbReference type="GO" id="GO:0033314">
    <property type="term" value="P:mitotic DNA replication checkpoint signaling"/>
    <property type="evidence" value="ECO:0000318"/>
    <property type="project" value="GO_Central"/>
</dbReference>
<dbReference type="GO" id="GO:0006289">
    <property type="term" value="P:nucleotide-excision repair"/>
    <property type="evidence" value="ECO:0000315"/>
    <property type="project" value="SGD"/>
</dbReference>
<dbReference type="GO" id="GO:0007131">
    <property type="term" value="P:reciprocal meiotic recombination"/>
    <property type="evidence" value="ECO:0000315"/>
    <property type="project" value="SGD"/>
</dbReference>
<dbReference type="CDD" id="cd18140">
    <property type="entry name" value="HLD_clamp_RFC"/>
    <property type="match status" value="1"/>
</dbReference>
<dbReference type="FunFam" id="3.40.50.300:FF:002612">
    <property type="entry name" value="RAD24p Checkpoint protein"/>
    <property type="match status" value="1"/>
</dbReference>
<dbReference type="Gene3D" id="3.40.50.300">
    <property type="entry name" value="P-loop containing nucleotide triphosphate hydrolases"/>
    <property type="match status" value="1"/>
</dbReference>
<dbReference type="InterPro" id="IPR004582">
    <property type="entry name" value="Checkpoint_prot_Rad17_Rad24"/>
</dbReference>
<dbReference type="InterPro" id="IPR027417">
    <property type="entry name" value="P-loop_NTPase"/>
</dbReference>
<dbReference type="InterPro" id="IPR018324">
    <property type="entry name" value="Rad17/Rad24_fun/met"/>
</dbReference>
<dbReference type="InterPro" id="IPR047854">
    <property type="entry name" value="RFC_lid"/>
</dbReference>
<dbReference type="NCBIfam" id="TIGR00602">
    <property type="entry name" value="rad24"/>
    <property type="match status" value="1"/>
</dbReference>
<dbReference type="PANTHER" id="PTHR12172">
    <property type="entry name" value="CELL CYCLE CHECKPOINT PROTEIN RAD17"/>
    <property type="match status" value="1"/>
</dbReference>
<dbReference type="PANTHER" id="PTHR12172:SF0">
    <property type="entry name" value="CELL CYCLE CHECKPOINT PROTEIN RAD17"/>
    <property type="match status" value="1"/>
</dbReference>
<dbReference type="Pfam" id="PF03215">
    <property type="entry name" value="Rad17"/>
    <property type="match status" value="1"/>
</dbReference>
<dbReference type="SUPFAM" id="SSF52540">
    <property type="entry name" value="P-loop containing nucleoside triphosphate hydrolases"/>
    <property type="match status" value="1"/>
</dbReference>
<proteinExistence type="evidence at protein level"/>
<feature type="chain" id="PRO_0000209953" description="Checkpoint protein RAD24">
    <location>
        <begin position="1"/>
        <end position="659"/>
    </location>
</feature>
<feature type="region of interest" description="Disordered" evidence="2">
    <location>
        <begin position="24"/>
        <end position="54"/>
    </location>
</feature>
<feature type="region of interest" description="Disordered" evidence="2">
    <location>
        <begin position="596"/>
        <end position="659"/>
    </location>
</feature>
<feature type="compositionally biased region" description="Acidic residues" evidence="2">
    <location>
        <begin position="596"/>
        <end position="612"/>
    </location>
</feature>
<feature type="binding site" evidence="1">
    <location>
        <begin position="109"/>
        <end position="116"/>
    </location>
    <ligand>
        <name>ATP</name>
        <dbReference type="ChEBI" id="CHEBI:30616"/>
    </ligand>
</feature>
<feature type="modified residue" description="Phosphoserine" evidence="11 12">
    <location>
        <position position="652"/>
    </location>
</feature>
<feature type="modified residue" description="Phosphoserine" evidence="11 12">
    <location>
        <position position="654"/>
    </location>
</feature>
<feature type="mutagenesis site" description="Reduces NTP-binding and hydrolysis. Shows DNA damage sensitivity." evidence="4">
    <original>K</original>
    <variation>E</variation>
    <location>
        <position position="115"/>
    </location>
</feature>
<feature type="mutagenesis site" description="No effect on NTP-binding and hydrolysis. Resistant to DNA damage." evidence="4">
    <original>K</original>
    <variation>R</variation>
    <location>
        <position position="115"/>
    </location>
</feature>
<feature type="helix" evidence="17">
    <location>
        <begin position="66"/>
        <end position="69"/>
    </location>
</feature>
<feature type="helix" evidence="17">
    <location>
        <begin position="75"/>
        <end position="77"/>
    </location>
</feature>
<feature type="helix" evidence="17">
    <location>
        <begin position="82"/>
        <end position="95"/>
    </location>
</feature>
<feature type="strand" evidence="19">
    <location>
        <begin position="97"/>
        <end position="99"/>
    </location>
</feature>
<feature type="strand" evidence="17">
    <location>
        <begin position="104"/>
        <end position="110"/>
    </location>
</feature>
<feature type="strand" evidence="16">
    <location>
        <begin position="111"/>
        <end position="113"/>
    </location>
</feature>
<feature type="helix" evidence="17">
    <location>
        <begin position="115"/>
        <end position="130"/>
    </location>
</feature>
<feature type="strand" evidence="17">
    <location>
        <begin position="139"/>
        <end position="142"/>
    </location>
</feature>
<feature type="strand" evidence="17">
    <location>
        <begin position="148"/>
        <end position="150"/>
    </location>
</feature>
<feature type="strand" evidence="15">
    <location>
        <begin position="158"/>
        <end position="160"/>
    </location>
</feature>
<feature type="helix" evidence="17">
    <location>
        <begin position="162"/>
        <end position="164"/>
    </location>
</feature>
<feature type="helix" evidence="17">
    <location>
        <begin position="165"/>
        <end position="173"/>
    </location>
</feature>
<feature type="helix" evidence="17">
    <location>
        <begin position="178"/>
        <end position="180"/>
    </location>
</feature>
<feature type="strand" evidence="17">
    <location>
        <begin position="183"/>
        <end position="186"/>
    </location>
</feature>
<feature type="helix" evidence="17">
    <location>
        <begin position="195"/>
        <end position="209"/>
    </location>
</feature>
<feature type="strand" evidence="17">
    <location>
        <begin position="219"/>
        <end position="224"/>
    </location>
</feature>
<feature type="turn" evidence="17">
    <location>
        <begin position="232"/>
        <end position="234"/>
    </location>
</feature>
<feature type="helix" evidence="17">
    <location>
        <begin position="239"/>
        <end position="242"/>
    </location>
</feature>
<feature type="strand" evidence="17">
    <location>
        <begin position="243"/>
        <end position="245"/>
    </location>
</feature>
<feature type="helix" evidence="17">
    <location>
        <begin position="246"/>
        <end position="249"/>
    </location>
</feature>
<feature type="helix" evidence="17">
    <location>
        <begin position="252"/>
        <end position="255"/>
    </location>
</feature>
<feature type="strand" evidence="17">
    <location>
        <begin position="260"/>
        <end position="264"/>
    </location>
</feature>
<feature type="helix" evidence="17">
    <location>
        <begin position="270"/>
        <end position="283"/>
    </location>
</feature>
<feature type="helix" evidence="17">
    <location>
        <begin position="285"/>
        <end position="290"/>
    </location>
</feature>
<feature type="helix" evidence="14">
    <location>
        <begin position="293"/>
        <end position="296"/>
    </location>
</feature>
<feature type="helix" evidence="17">
    <location>
        <begin position="297"/>
        <end position="307"/>
    </location>
</feature>
<feature type="helix" evidence="17">
    <location>
        <begin position="311"/>
        <end position="322"/>
    </location>
</feature>
<feature type="helix" evidence="17">
    <location>
        <begin position="339"/>
        <end position="348"/>
    </location>
</feature>
<feature type="helix" evidence="17">
    <location>
        <begin position="356"/>
        <end position="366"/>
    </location>
</feature>
<feature type="helix" evidence="17">
    <location>
        <begin position="368"/>
        <end position="372"/>
    </location>
</feature>
<feature type="helix" evidence="17">
    <location>
        <begin position="375"/>
        <end position="383"/>
    </location>
</feature>
<feature type="helix" evidence="17">
    <location>
        <begin position="384"/>
        <end position="389"/>
    </location>
</feature>
<feature type="helix" evidence="17">
    <location>
        <begin position="394"/>
        <end position="407"/>
    </location>
</feature>
<feature type="turn" evidence="18">
    <location>
        <begin position="409"/>
        <end position="412"/>
    </location>
</feature>
<feature type="helix" evidence="17">
    <location>
        <begin position="414"/>
        <end position="430"/>
    </location>
</feature>
<feature type="helix" evidence="13">
    <location>
        <begin position="432"/>
        <end position="434"/>
    </location>
</feature>
<feature type="helix" evidence="17">
    <location>
        <begin position="446"/>
        <end position="471"/>
    </location>
</feature>
<feature type="helix" evidence="17">
    <location>
        <begin position="477"/>
        <end position="482"/>
    </location>
</feature>
<feature type="helix" evidence="17">
    <location>
        <begin position="484"/>
        <end position="508"/>
    </location>
</feature>
<feature type="turn" evidence="17">
    <location>
        <begin position="522"/>
        <end position="528"/>
    </location>
</feature>
<feature type="turn" evidence="17">
    <location>
        <begin position="531"/>
        <end position="533"/>
    </location>
</feature>
<feature type="helix" evidence="17">
    <location>
        <begin position="565"/>
        <end position="590"/>
    </location>
</feature>
<feature type="helix" evidence="17">
    <location>
        <begin position="599"/>
        <end position="603"/>
    </location>
</feature>